<sequence length="883" mass="98762">MAAKIGEIVQVHNDNPVKRVPIARPSFGREGKQIKLLSNHFTVKLSGIDAVFYQYSVSIKSEDDKVIDGKGIGRKVMDKVLQTYSSELAGKEFAYDGEKCLFTVGPLPQNNFEFTVILEETSSRAAGGSLGHGSPNQGDKKRSKCTHLAKKIVVGISYAAKIPLKSVALALQGSESDHAQDALRVLDIVLRQQQAKRGCLLVRQSFFSDDFRNLVDLTGGVSGCRGLHSSFRTTIGGLSLNMDVSTTMIVTPGPVFDFLLTNQNVRDIRDIDWPRAKKMLKNLRVKAIHNNMEFKIIGLSDEPCSRQTFPMKVRNGSSEGETVEITVQEYFKSKQVDLTMPYLPCLDVGKPKRPNYVPIELCHMVSLQRYTKALSSQQRATLVEKSRQKPQERMRVVTDAVKNNRYDDDPILSSCGIKIEKQLTRVDGRVLSAPTLVVGNSEDCIPNRGRWNYNNKRLFEPVKIERWAIVNFSARCDMSRISRDLINCGRTKGIIIERPFTLVDEDSQSRRCTPVVRVESMFEKVKANLPGPPEFLLCVLPERKNCDLYGPWKKKNLHEMGIITQCIVPSVKMNDQYYTNVLLKINAKLGGMNSKLSLEHRHMIPIVNQTPTLILGMDVSHGSPGRADVPSIAAVVGSRCWPLISRYRASVRTQSPKVEMIDSLFKPLDDGKDDGIIRELLLDFYKTSQQRKPKQIIIFRDGVSESQFSQVLNVELNQIIKAYQYMDQGPIPKFTVIIAQKNHHTKLFQENTPDNVPPGTVVDSGIVHPRQYDFYMYAHAGPIGTSRPTHYHVLLDEIGFLPDDVQKLVLSLSYVYQRSTTAISVVAPICYAHLAAAQMGQFMKFEEFAETSSGSGGVPSSSGAVVPELPRLHADVCSSMFFC</sequence>
<organism>
    <name type="scientific">Oryza sativa subsp. japonica</name>
    <name type="common">Rice</name>
    <dbReference type="NCBI Taxonomy" id="39947"/>
    <lineage>
        <taxon>Eukaryota</taxon>
        <taxon>Viridiplantae</taxon>
        <taxon>Streptophyta</taxon>
        <taxon>Embryophyta</taxon>
        <taxon>Tracheophyta</taxon>
        <taxon>Spermatophyta</taxon>
        <taxon>Magnoliopsida</taxon>
        <taxon>Liliopsida</taxon>
        <taxon>Poales</taxon>
        <taxon>Poaceae</taxon>
        <taxon>BOP clade</taxon>
        <taxon>Oryzoideae</taxon>
        <taxon>Oryzeae</taxon>
        <taxon>Oryzinae</taxon>
        <taxon>Oryza</taxon>
        <taxon>Oryza sativa</taxon>
    </lineage>
</organism>
<protein>
    <recommendedName>
        <fullName>Protein argonaute 16</fullName>
        <shortName>OsAGO16</shortName>
    </recommendedName>
    <alternativeName>
        <fullName>OsAGO6</fullName>
    </alternativeName>
    <alternativeName>
        <fullName>Protein ZWILLE/PINHEAD-like 1</fullName>
    </alternativeName>
</protein>
<reference key="1">
    <citation type="journal article" date="2005" name="Nature">
        <title>The map-based sequence of the rice genome.</title>
        <authorList>
            <consortium name="International rice genome sequencing project (IRGSP)"/>
        </authorList>
    </citation>
    <scope>NUCLEOTIDE SEQUENCE [LARGE SCALE GENOMIC DNA]</scope>
    <source>
        <strain>cv. Nipponbare</strain>
    </source>
</reference>
<reference key="2">
    <citation type="journal article" date="2008" name="Nucleic Acids Res.">
        <title>The rice annotation project database (RAP-DB): 2008 update.</title>
        <authorList>
            <consortium name="The rice annotation project (RAP)"/>
        </authorList>
    </citation>
    <scope>GENOME REANNOTATION</scope>
    <source>
        <strain>cv. Nipponbare</strain>
    </source>
</reference>
<reference key="3">
    <citation type="journal article" date="2013" name="Rice">
        <title>Improvement of the Oryza sativa Nipponbare reference genome using next generation sequence and optical map data.</title>
        <authorList>
            <person name="Kawahara Y."/>
            <person name="de la Bastide M."/>
            <person name="Hamilton J.P."/>
            <person name="Kanamori H."/>
            <person name="McCombie W.R."/>
            <person name="Ouyang S."/>
            <person name="Schwartz D.C."/>
            <person name="Tanaka T."/>
            <person name="Wu J."/>
            <person name="Zhou S."/>
            <person name="Childs K.L."/>
            <person name="Davidson R.M."/>
            <person name="Lin H."/>
            <person name="Quesada-Ocampo L."/>
            <person name="Vaillancourt B."/>
            <person name="Sakai H."/>
            <person name="Lee S.S."/>
            <person name="Kim J."/>
            <person name="Numa H."/>
            <person name="Itoh T."/>
            <person name="Buell C.R."/>
            <person name="Matsumoto T."/>
        </authorList>
    </citation>
    <scope>GENOME REANNOTATION</scope>
    <source>
        <strain>cv. Nipponbare</strain>
    </source>
</reference>
<reference key="4">
    <citation type="submission" date="2003-06" db="EMBL/GenBank/DDBJ databases">
        <title>A rice zwille pinhead-like protein takes part in disease resistant through H-box.</title>
        <authorList>
            <person name="Quanhong Y."/>
            <person name="Rihe P."/>
            <person name="Aisheng X."/>
        </authorList>
    </citation>
    <scope>NUCLEOTIDE SEQUENCE [MRNA] OF 517-883</scope>
</reference>
<reference key="5">
    <citation type="journal article" date="2003" name="Science">
        <title>Collection, mapping, and annotation of over 28,000 cDNA clones from japonica rice.</title>
        <authorList>
            <consortium name="The rice full-length cDNA consortium"/>
        </authorList>
    </citation>
    <scope>NUCLEOTIDE SEQUENCE [LARGE SCALE MRNA] OF 575-883</scope>
    <source>
        <strain>cv. Nipponbare</strain>
    </source>
</reference>
<reference key="6">
    <citation type="submission" date="2002-01" db="EMBL/GenBank/DDBJ databases">
        <title>Oryza sativa zwille/pinhead-like protein mRNA.</title>
        <authorList>
            <person name="Rihe P."/>
            <person name="Quanhong Y."/>
            <person name="Aisheng X."/>
            <person name="Xian L."/>
            <person name="Huiqin F."/>
        </authorList>
    </citation>
    <scope>NUCLEOTIDE SEQUENCE [MRNA] OF 693-883</scope>
</reference>
<reference key="7">
    <citation type="journal article" date="2008" name="BMC Genomics">
        <title>Genome-wide identification, organization and phylogenetic analysis of dicer-like, argonaute and RNA-dependent RNA polymerase gene families and their expression analysis during reproductive development and stress in rice.</title>
        <authorList>
            <person name="Kapoor M."/>
            <person name="Arora R."/>
            <person name="Lama T."/>
            <person name="Nijhawan A."/>
            <person name="Khurana J.P."/>
            <person name="Tyagi A.K."/>
            <person name="Kapoor S."/>
        </authorList>
    </citation>
    <scope>GENE FAMILY</scope>
    <scope>NOMENCLATURE</scope>
</reference>
<gene>
    <name type="primary">AGO16</name>
    <name type="synonym">ZP1</name>
    <name type="ordered locus">Os07g0265600</name>
    <name type="ordered locus">LOC_Os07g16224</name>
    <name type="ORF">B1059D01.1</name>
    <name type="ORF">B1100H02.17</name>
</gene>
<comment type="function">
    <text evidence="1">Probably involved in the RNA silencing pathway. May bind to short RNAs such as microRNAs (miRNAs) or short interfering RNAs (siRNAs), and represses the translation of mRNAs which are complementary to them (By similarity).</text>
</comment>
<comment type="similarity">
    <text evidence="4">Belongs to the argonaute family. Ago subfamily.</text>
</comment>
<comment type="sequence caution" evidence="4">
    <conflict type="frameshift">
        <sequence resource="EMBL-CDS" id="AAL77199"/>
    </conflict>
</comment>
<comment type="sequence caution" evidence="4">
    <conflict type="miscellaneous discrepancy">
        <sequence resource="EMBL-CDS" id="AAL77199"/>
    </conflict>
    <text>Sequencing errors.</text>
</comment>
<comment type="sequence caution" evidence="4">
    <conflict type="erroneous initiation">
        <sequence resource="EMBL-CDS" id="AAP92749"/>
    </conflict>
    <text>Truncated N-terminus.</text>
</comment>
<comment type="sequence caution" evidence="4">
    <conflict type="frameshift">
        <sequence resource="EMBL-CDS" id="AAP92749"/>
    </conflict>
</comment>
<comment type="sequence caution" evidence="4">
    <conflict type="erroneous gene model prediction">
        <sequence resource="EMBL-CDS" id="BAC84805"/>
    </conflict>
</comment>
<comment type="sequence caution" evidence="4">
    <conflict type="erroneous gene model prediction">
        <sequence resource="EMBL-CDS" id="BAD32046"/>
    </conflict>
</comment>
<comment type="sequence caution" evidence="4">
    <conflict type="erroneous gene model prediction">
        <sequence resource="EMBL-CDS" id="BAF21249"/>
    </conflict>
</comment>
<dbReference type="EMBL" id="AP006447">
    <property type="protein sequence ID" value="BAC84805.1"/>
    <property type="status" value="ALT_SEQ"/>
    <property type="molecule type" value="Genomic_DNA"/>
</dbReference>
<dbReference type="EMBL" id="AP006465">
    <property type="protein sequence ID" value="BAD32046.1"/>
    <property type="status" value="ALT_SEQ"/>
    <property type="molecule type" value="Genomic_DNA"/>
</dbReference>
<dbReference type="EMBL" id="AP008213">
    <property type="protein sequence ID" value="BAF21249.2"/>
    <property type="status" value="ALT_SEQ"/>
    <property type="molecule type" value="Genomic_DNA"/>
</dbReference>
<dbReference type="EMBL" id="AP014963">
    <property type="status" value="NOT_ANNOTATED_CDS"/>
    <property type="molecule type" value="Genomic_DNA"/>
</dbReference>
<dbReference type="EMBL" id="AY323483">
    <property type="protein sequence ID" value="AAP92749.1"/>
    <property type="status" value="ALT_SEQ"/>
    <property type="molecule type" value="mRNA"/>
</dbReference>
<dbReference type="EMBL" id="AK101842">
    <property type="status" value="NOT_ANNOTATED_CDS"/>
    <property type="molecule type" value="mRNA"/>
</dbReference>
<dbReference type="EMBL" id="AY072819">
    <property type="protein sequence ID" value="AAL77199.1"/>
    <property type="status" value="ALT_SEQ"/>
    <property type="molecule type" value="mRNA"/>
</dbReference>
<dbReference type="SMR" id="Q6YSJ5"/>
<dbReference type="FunCoup" id="Q6YSJ5">
    <property type="interactions" value="4"/>
</dbReference>
<dbReference type="STRING" id="39947.Q6YSJ5"/>
<dbReference type="PaxDb" id="39947-Q6YSJ5"/>
<dbReference type="KEGG" id="dosa:Os07g0265600"/>
<dbReference type="eggNOG" id="KOG1041">
    <property type="taxonomic scope" value="Eukaryota"/>
</dbReference>
<dbReference type="InParanoid" id="Q6YSJ5"/>
<dbReference type="Proteomes" id="UP000000763">
    <property type="component" value="Chromosome 7"/>
</dbReference>
<dbReference type="Proteomes" id="UP000059680">
    <property type="component" value="Chromosome 7"/>
</dbReference>
<dbReference type="GO" id="GO:0005737">
    <property type="term" value="C:cytoplasm"/>
    <property type="evidence" value="ECO:0000318"/>
    <property type="project" value="GO_Central"/>
</dbReference>
<dbReference type="GO" id="GO:0005634">
    <property type="term" value="C:nucleus"/>
    <property type="evidence" value="ECO:0000318"/>
    <property type="project" value="GO_Central"/>
</dbReference>
<dbReference type="GO" id="GO:0003723">
    <property type="term" value="F:RNA binding"/>
    <property type="evidence" value="ECO:0000318"/>
    <property type="project" value="GO_Central"/>
</dbReference>
<dbReference type="GO" id="GO:0004521">
    <property type="term" value="F:RNA endonuclease activity"/>
    <property type="evidence" value="ECO:0000318"/>
    <property type="project" value="GO_Central"/>
</dbReference>
<dbReference type="GO" id="GO:0031047">
    <property type="term" value="P:regulatory ncRNA-mediated gene silencing"/>
    <property type="evidence" value="ECO:0000318"/>
    <property type="project" value="GO_Central"/>
</dbReference>
<dbReference type="CDD" id="cd02846">
    <property type="entry name" value="PAZ_argonaute_like"/>
    <property type="match status" value="1"/>
</dbReference>
<dbReference type="CDD" id="cd04657">
    <property type="entry name" value="Piwi_ago-like"/>
    <property type="match status" value="1"/>
</dbReference>
<dbReference type="FunFam" id="3.30.420.10:FF:000091">
    <property type="entry name" value="Protein argonaute 3"/>
    <property type="match status" value="1"/>
</dbReference>
<dbReference type="FunFam" id="2.170.260.10:FF:000008">
    <property type="entry name" value="Protein argonaute 7"/>
    <property type="match status" value="1"/>
</dbReference>
<dbReference type="Gene3D" id="3.40.50.2300">
    <property type="match status" value="1"/>
</dbReference>
<dbReference type="Gene3D" id="2.170.260.10">
    <property type="entry name" value="paz domain"/>
    <property type="match status" value="1"/>
</dbReference>
<dbReference type="Gene3D" id="3.30.420.10">
    <property type="entry name" value="Ribonuclease H-like superfamily/Ribonuclease H"/>
    <property type="match status" value="1"/>
</dbReference>
<dbReference type="InterPro" id="IPR014811">
    <property type="entry name" value="ArgoL1"/>
</dbReference>
<dbReference type="InterPro" id="IPR032472">
    <property type="entry name" value="ArgoL2"/>
</dbReference>
<dbReference type="InterPro" id="IPR032473">
    <property type="entry name" value="Argonaute_Mid_dom"/>
</dbReference>
<dbReference type="InterPro" id="IPR032474">
    <property type="entry name" value="Argonaute_N"/>
</dbReference>
<dbReference type="InterPro" id="IPR003100">
    <property type="entry name" value="PAZ_dom"/>
</dbReference>
<dbReference type="InterPro" id="IPR036085">
    <property type="entry name" value="PAZ_dom_sf"/>
</dbReference>
<dbReference type="InterPro" id="IPR003165">
    <property type="entry name" value="Piwi"/>
</dbReference>
<dbReference type="InterPro" id="IPR045246">
    <property type="entry name" value="Piwi_ago-like"/>
</dbReference>
<dbReference type="InterPro" id="IPR012337">
    <property type="entry name" value="RNaseH-like_sf"/>
</dbReference>
<dbReference type="InterPro" id="IPR036397">
    <property type="entry name" value="RNaseH_sf"/>
</dbReference>
<dbReference type="PANTHER" id="PTHR22891">
    <property type="entry name" value="EUKARYOTIC TRANSLATION INITIATION FACTOR 2C"/>
    <property type="match status" value="1"/>
</dbReference>
<dbReference type="Pfam" id="PF08699">
    <property type="entry name" value="ArgoL1"/>
    <property type="match status" value="1"/>
</dbReference>
<dbReference type="Pfam" id="PF16488">
    <property type="entry name" value="ArgoL2"/>
    <property type="match status" value="1"/>
</dbReference>
<dbReference type="Pfam" id="PF16487">
    <property type="entry name" value="ArgoMid"/>
    <property type="match status" value="1"/>
</dbReference>
<dbReference type="Pfam" id="PF16486">
    <property type="entry name" value="ArgoN"/>
    <property type="match status" value="1"/>
</dbReference>
<dbReference type="Pfam" id="PF02170">
    <property type="entry name" value="PAZ"/>
    <property type="match status" value="1"/>
</dbReference>
<dbReference type="Pfam" id="PF02171">
    <property type="entry name" value="Piwi"/>
    <property type="match status" value="1"/>
</dbReference>
<dbReference type="SMART" id="SM01163">
    <property type="entry name" value="DUF1785"/>
    <property type="match status" value="1"/>
</dbReference>
<dbReference type="SMART" id="SM00949">
    <property type="entry name" value="PAZ"/>
    <property type="match status" value="1"/>
</dbReference>
<dbReference type="SMART" id="SM00950">
    <property type="entry name" value="Piwi"/>
    <property type="match status" value="1"/>
</dbReference>
<dbReference type="SUPFAM" id="SSF101690">
    <property type="entry name" value="PAZ domain"/>
    <property type="match status" value="1"/>
</dbReference>
<dbReference type="SUPFAM" id="SSF53098">
    <property type="entry name" value="Ribonuclease H-like"/>
    <property type="match status" value="1"/>
</dbReference>
<dbReference type="PROSITE" id="PS50821">
    <property type="entry name" value="PAZ"/>
    <property type="match status" value="1"/>
</dbReference>
<dbReference type="PROSITE" id="PS50822">
    <property type="entry name" value="PIWI"/>
    <property type="match status" value="1"/>
</dbReference>
<evidence type="ECO:0000250" key="1"/>
<evidence type="ECO:0000255" key="2">
    <source>
        <dbReference type="PROSITE-ProRule" id="PRU00142"/>
    </source>
</evidence>
<evidence type="ECO:0000255" key="3">
    <source>
        <dbReference type="PROSITE-ProRule" id="PRU00150"/>
    </source>
</evidence>
<evidence type="ECO:0000305" key="4"/>
<proteinExistence type="evidence at transcript level"/>
<accession>Q6YSJ5</accession>
<accession>Q0D7C4</accession>
<accession>Q7XBH5</accession>
<accession>Q8S9N1</accession>
<feature type="chain" id="PRO_0000378439" description="Protein argonaute 16">
    <location>
        <begin position="1"/>
        <end position="883"/>
    </location>
</feature>
<feature type="domain" description="PAZ" evidence="2">
    <location>
        <begin position="254"/>
        <end position="366"/>
    </location>
</feature>
<feature type="domain" description="Piwi" evidence="3">
    <location>
        <begin position="535"/>
        <end position="844"/>
    </location>
</feature>
<feature type="sequence conflict" description="In Ref. 4; AAP92749." evidence="4" ref="4">
    <original>V</original>
    <variation>A</variation>
    <location>
        <position position="636"/>
    </location>
</feature>
<keyword id="KW-1185">Reference proteome</keyword>
<keyword id="KW-0943">RNA-mediated gene silencing</keyword>
<name>AGO16_ORYSJ</name>